<sequence length="160" mass="17324">MNPLAAIELDLAYLGPDPLGEDRWVELLSSWLAQLQAELPSPLKADAYSLGLQFCDDAAIAELNGQWRQQPKPTDVLSFAAQEDAPEPLEGLPIELGDIVISIPTAERQAPEHGHSLQQELLFLASHGLLHLLGWDHPDEASLAAMLSRQDALVQGAAAH</sequence>
<keyword id="KW-0963">Cytoplasm</keyword>
<keyword id="KW-0255">Endonuclease</keyword>
<keyword id="KW-0378">Hydrolase</keyword>
<keyword id="KW-0479">Metal-binding</keyword>
<keyword id="KW-0540">Nuclease</keyword>
<keyword id="KW-1185">Reference proteome</keyword>
<keyword id="KW-0690">Ribosome biogenesis</keyword>
<keyword id="KW-0698">rRNA processing</keyword>
<keyword id="KW-0862">Zinc</keyword>
<dbReference type="EC" id="3.1.-.-" evidence="1"/>
<dbReference type="EMBL" id="CT978603">
    <property type="protein sequence ID" value="CAK29149.1"/>
    <property type="molecule type" value="Genomic_DNA"/>
</dbReference>
<dbReference type="SMR" id="A5GW90"/>
<dbReference type="STRING" id="316278.SynRCC307_2246"/>
<dbReference type="KEGG" id="syr:SynRCC307_2246"/>
<dbReference type="eggNOG" id="COG0319">
    <property type="taxonomic scope" value="Bacteria"/>
</dbReference>
<dbReference type="HOGENOM" id="CLU_106710_3_0_3"/>
<dbReference type="OrthoDB" id="9807740at2"/>
<dbReference type="Proteomes" id="UP000001115">
    <property type="component" value="Chromosome"/>
</dbReference>
<dbReference type="GO" id="GO:0005737">
    <property type="term" value="C:cytoplasm"/>
    <property type="evidence" value="ECO:0007669"/>
    <property type="project" value="UniProtKB-SubCell"/>
</dbReference>
<dbReference type="GO" id="GO:0004222">
    <property type="term" value="F:metalloendopeptidase activity"/>
    <property type="evidence" value="ECO:0007669"/>
    <property type="project" value="InterPro"/>
</dbReference>
<dbReference type="GO" id="GO:0004521">
    <property type="term" value="F:RNA endonuclease activity"/>
    <property type="evidence" value="ECO:0007669"/>
    <property type="project" value="UniProtKB-UniRule"/>
</dbReference>
<dbReference type="GO" id="GO:0008270">
    <property type="term" value="F:zinc ion binding"/>
    <property type="evidence" value="ECO:0007669"/>
    <property type="project" value="UniProtKB-UniRule"/>
</dbReference>
<dbReference type="GO" id="GO:0006364">
    <property type="term" value="P:rRNA processing"/>
    <property type="evidence" value="ECO:0007669"/>
    <property type="project" value="UniProtKB-UniRule"/>
</dbReference>
<dbReference type="Gene3D" id="3.40.390.30">
    <property type="entry name" value="Metalloproteases ('zincins'), catalytic domain"/>
    <property type="match status" value="1"/>
</dbReference>
<dbReference type="HAMAP" id="MF_00009">
    <property type="entry name" value="Endoribonucl_YbeY"/>
    <property type="match status" value="1"/>
</dbReference>
<dbReference type="InterPro" id="IPR023091">
    <property type="entry name" value="MetalPrtase_cat_dom_sf_prd"/>
</dbReference>
<dbReference type="InterPro" id="IPR002036">
    <property type="entry name" value="YbeY"/>
</dbReference>
<dbReference type="InterPro" id="IPR020549">
    <property type="entry name" value="YbeY_CS"/>
</dbReference>
<dbReference type="NCBIfam" id="TIGR00043">
    <property type="entry name" value="rRNA maturation RNase YbeY"/>
    <property type="match status" value="1"/>
</dbReference>
<dbReference type="PANTHER" id="PTHR46986">
    <property type="entry name" value="ENDORIBONUCLEASE YBEY, CHLOROPLASTIC"/>
    <property type="match status" value="1"/>
</dbReference>
<dbReference type="PANTHER" id="PTHR46986:SF1">
    <property type="entry name" value="ENDORIBONUCLEASE YBEY, CHLOROPLASTIC"/>
    <property type="match status" value="1"/>
</dbReference>
<dbReference type="Pfam" id="PF02130">
    <property type="entry name" value="YbeY"/>
    <property type="match status" value="1"/>
</dbReference>
<dbReference type="SUPFAM" id="SSF55486">
    <property type="entry name" value="Metalloproteases ('zincins'), catalytic domain"/>
    <property type="match status" value="1"/>
</dbReference>
<dbReference type="PROSITE" id="PS01306">
    <property type="entry name" value="UPF0054"/>
    <property type="match status" value="1"/>
</dbReference>
<comment type="function">
    <text evidence="1">Single strand-specific metallo-endoribonuclease involved in late-stage 70S ribosome quality control and in maturation of the 3' terminus of the 16S rRNA.</text>
</comment>
<comment type="cofactor">
    <cofactor evidence="1">
        <name>Zn(2+)</name>
        <dbReference type="ChEBI" id="CHEBI:29105"/>
    </cofactor>
    <text evidence="1">Binds 1 zinc ion.</text>
</comment>
<comment type="subcellular location">
    <subcellularLocation>
        <location evidence="1">Cytoplasm</location>
    </subcellularLocation>
</comment>
<comment type="similarity">
    <text evidence="1">Belongs to the endoribonuclease YbeY family.</text>
</comment>
<organism>
    <name type="scientific">Synechococcus sp. (strain RCC307)</name>
    <dbReference type="NCBI Taxonomy" id="316278"/>
    <lineage>
        <taxon>Bacteria</taxon>
        <taxon>Bacillati</taxon>
        <taxon>Cyanobacteriota</taxon>
        <taxon>Cyanophyceae</taxon>
        <taxon>Synechococcales</taxon>
        <taxon>Synechococcaceae</taxon>
        <taxon>Synechococcus</taxon>
    </lineage>
</organism>
<reference key="1">
    <citation type="submission" date="2006-05" db="EMBL/GenBank/DDBJ databases">
        <authorList>
            <consortium name="Genoscope"/>
        </authorList>
    </citation>
    <scope>NUCLEOTIDE SEQUENCE [LARGE SCALE GENOMIC DNA]</scope>
    <source>
        <strain>RCC307</strain>
    </source>
</reference>
<proteinExistence type="inferred from homology"/>
<name>YBEY_SYNR3</name>
<gene>
    <name evidence="1" type="primary">ybeY</name>
    <name type="ordered locus">SynRCC307_2246</name>
</gene>
<feature type="chain" id="PRO_0000321787" description="Endoribonuclease YbeY">
    <location>
        <begin position="1"/>
        <end position="160"/>
    </location>
</feature>
<feature type="binding site" evidence="1">
    <location>
        <position position="127"/>
    </location>
    <ligand>
        <name>Zn(2+)</name>
        <dbReference type="ChEBI" id="CHEBI:29105"/>
        <note>catalytic</note>
    </ligand>
</feature>
<feature type="binding site" evidence="1">
    <location>
        <position position="131"/>
    </location>
    <ligand>
        <name>Zn(2+)</name>
        <dbReference type="ChEBI" id="CHEBI:29105"/>
        <note>catalytic</note>
    </ligand>
</feature>
<feature type="binding site" evidence="1">
    <location>
        <position position="137"/>
    </location>
    <ligand>
        <name>Zn(2+)</name>
        <dbReference type="ChEBI" id="CHEBI:29105"/>
        <note>catalytic</note>
    </ligand>
</feature>
<protein>
    <recommendedName>
        <fullName evidence="1">Endoribonuclease YbeY</fullName>
        <ecNumber evidence="1">3.1.-.-</ecNumber>
    </recommendedName>
</protein>
<accession>A5GW90</accession>
<evidence type="ECO:0000255" key="1">
    <source>
        <dbReference type="HAMAP-Rule" id="MF_00009"/>
    </source>
</evidence>